<evidence type="ECO:0000255" key="1"/>
<evidence type="ECO:0000256" key="2">
    <source>
        <dbReference type="SAM" id="MobiDB-lite"/>
    </source>
</evidence>
<evidence type="ECO:0000303" key="3">
    <source>
    </source>
</evidence>
<accession>Q96AQ1</accession>
<accession>Q6P4I5</accession>
<proteinExistence type="evidence at protein level"/>
<organism>
    <name type="scientific">Homo sapiens</name>
    <name type="common">Human</name>
    <dbReference type="NCBI Taxonomy" id="9606"/>
    <lineage>
        <taxon>Eukaryota</taxon>
        <taxon>Metazoa</taxon>
        <taxon>Chordata</taxon>
        <taxon>Craniata</taxon>
        <taxon>Vertebrata</taxon>
        <taxon>Euteleostomi</taxon>
        <taxon>Mammalia</taxon>
        <taxon>Eutheria</taxon>
        <taxon>Euarchontoglires</taxon>
        <taxon>Primates</taxon>
        <taxon>Haplorrhini</taxon>
        <taxon>Catarrhini</taxon>
        <taxon>Hominidae</taxon>
        <taxon>Homo</taxon>
    </lineage>
</organism>
<reference key="1">
    <citation type="journal article" date="2005" name="Nature">
        <title>Generation and annotation of the DNA sequences of human chromosomes 2 and 4.</title>
        <authorList>
            <person name="Hillier L.W."/>
            <person name="Graves T.A."/>
            <person name="Fulton R.S."/>
            <person name="Fulton L.A."/>
            <person name="Pepin K.H."/>
            <person name="Minx P."/>
            <person name="Wagner-McPherson C."/>
            <person name="Layman D."/>
            <person name="Wylie K."/>
            <person name="Sekhon M."/>
            <person name="Becker M.C."/>
            <person name="Fewell G.A."/>
            <person name="Delehaunty K.D."/>
            <person name="Miner T.L."/>
            <person name="Nash W.E."/>
            <person name="Kremitzki C."/>
            <person name="Oddy L."/>
            <person name="Du H."/>
            <person name="Sun H."/>
            <person name="Bradshaw-Cordum H."/>
            <person name="Ali J."/>
            <person name="Carter J."/>
            <person name="Cordes M."/>
            <person name="Harris A."/>
            <person name="Isak A."/>
            <person name="van Brunt A."/>
            <person name="Nguyen C."/>
            <person name="Du F."/>
            <person name="Courtney L."/>
            <person name="Kalicki J."/>
            <person name="Ozersky P."/>
            <person name="Abbott S."/>
            <person name="Armstrong J."/>
            <person name="Belter E.A."/>
            <person name="Caruso L."/>
            <person name="Cedroni M."/>
            <person name="Cotton M."/>
            <person name="Davidson T."/>
            <person name="Desai A."/>
            <person name="Elliott G."/>
            <person name="Erb T."/>
            <person name="Fronick C."/>
            <person name="Gaige T."/>
            <person name="Haakenson W."/>
            <person name="Haglund K."/>
            <person name="Holmes A."/>
            <person name="Harkins R."/>
            <person name="Kim K."/>
            <person name="Kruchowski S.S."/>
            <person name="Strong C.M."/>
            <person name="Grewal N."/>
            <person name="Goyea E."/>
            <person name="Hou S."/>
            <person name="Levy A."/>
            <person name="Martinka S."/>
            <person name="Mead K."/>
            <person name="McLellan M.D."/>
            <person name="Meyer R."/>
            <person name="Randall-Maher J."/>
            <person name="Tomlinson C."/>
            <person name="Dauphin-Kohlberg S."/>
            <person name="Kozlowicz-Reilly A."/>
            <person name="Shah N."/>
            <person name="Swearengen-Shahid S."/>
            <person name="Snider J."/>
            <person name="Strong J.T."/>
            <person name="Thompson J."/>
            <person name="Yoakum M."/>
            <person name="Leonard S."/>
            <person name="Pearman C."/>
            <person name="Trani L."/>
            <person name="Radionenko M."/>
            <person name="Waligorski J.E."/>
            <person name="Wang C."/>
            <person name="Rock S.M."/>
            <person name="Tin-Wollam A.-M."/>
            <person name="Maupin R."/>
            <person name="Latreille P."/>
            <person name="Wendl M.C."/>
            <person name="Yang S.-P."/>
            <person name="Pohl C."/>
            <person name="Wallis J.W."/>
            <person name="Spieth J."/>
            <person name="Bieri T.A."/>
            <person name="Berkowicz N."/>
            <person name="Nelson J.O."/>
            <person name="Osborne J."/>
            <person name="Ding L."/>
            <person name="Meyer R."/>
            <person name="Sabo A."/>
            <person name="Shotland Y."/>
            <person name="Sinha P."/>
            <person name="Wohldmann P.E."/>
            <person name="Cook L.L."/>
            <person name="Hickenbotham M.T."/>
            <person name="Eldred J."/>
            <person name="Williams D."/>
            <person name="Jones T.A."/>
            <person name="She X."/>
            <person name="Ciccarelli F.D."/>
            <person name="Izaurralde E."/>
            <person name="Taylor J."/>
            <person name="Schmutz J."/>
            <person name="Myers R.M."/>
            <person name="Cox D.R."/>
            <person name="Huang X."/>
            <person name="McPherson J.D."/>
            <person name="Mardis E.R."/>
            <person name="Clifton S.W."/>
            <person name="Warren W.C."/>
            <person name="Chinwalla A.T."/>
            <person name="Eddy S.R."/>
            <person name="Marra M.A."/>
            <person name="Ovcharenko I."/>
            <person name="Furey T.S."/>
            <person name="Miller W."/>
            <person name="Eichler E.E."/>
            <person name="Bork P."/>
            <person name="Suyama M."/>
            <person name="Torrents D."/>
            <person name="Waterston R.H."/>
            <person name="Wilson R.K."/>
        </authorList>
    </citation>
    <scope>NUCLEOTIDE SEQUENCE [LARGE SCALE GENOMIC DNA]</scope>
</reference>
<reference key="2">
    <citation type="journal article" date="2004" name="Genome Res.">
        <title>The status, quality, and expansion of the NIH full-length cDNA project: the Mammalian Gene Collection (MGC).</title>
        <authorList>
            <consortium name="The MGC Project Team"/>
        </authorList>
    </citation>
    <scope>NUCLEOTIDE SEQUENCE [LARGE SCALE MRNA] (ISOFORMS 1 AND 2)</scope>
    <source>
        <tissue>Eye</tissue>
        <tissue>Uterus</tissue>
    </source>
</reference>
<sequence>MSGAGVAAGTRPPSSPTPGSRRRRQRPSVGVQSLRPQSPQLRQSDPQKRNLDLEKSLQFLQQQHSEMLAKLHEEIEHLKRENKDLHYKLIMNQTSQKKDGPSGNHLSRASAPLGARWVCINGVWVEPGGPSPARLKEGSSRTHRPGGKRGRLAGGSADTVRSPADSLSMSSFQSVKSISNSGKARPQPGSFNKQDSKADVSQKADLEEEPLLHNSKLDKVPGVQGQARKEKAEASNAGAACMGNSQHQGRQMGAGAHPPMILPLPLRKPTTLRQCEVLIRELWNTNLLQTQELRHLKSLLEGSQRPQAAPEEASFPRDQEATHFPKVSTKSLSKKCLSPPVAERAILPALKQTPKNNFAERQKRLQAMQKRRLHRSVL</sequence>
<feature type="chain" id="PRO_0000274374" description="Coiled-coil domain-containing protein 74A">
    <location>
        <begin position="1"/>
        <end position="378"/>
    </location>
</feature>
<feature type="region of interest" description="Disordered" evidence="2">
    <location>
        <begin position="1"/>
        <end position="52"/>
    </location>
</feature>
<feature type="region of interest" description="Disordered" evidence="2">
    <location>
        <begin position="128"/>
        <end position="211"/>
    </location>
</feature>
<feature type="region of interest" description="Disordered" evidence="2">
    <location>
        <begin position="301"/>
        <end position="328"/>
    </location>
</feature>
<feature type="coiled-coil region" evidence="1">
    <location>
        <begin position="47"/>
        <end position="90"/>
    </location>
</feature>
<feature type="compositionally biased region" description="Polar residues" evidence="2">
    <location>
        <begin position="34"/>
        <end position="44"/>
    </location>
</feature>
<feature type="compositionally biased region" description="Basic residues" evidence="2">
    <location>
        <begin position="141"/>
        <end position="151"/>
    </location>
</feature>
<feature type="compositionally biased region" description="Polar residues" evidence="2">
    <location>
        <begin position="165"/>
        <end position="182"/>
    </location>
</feature>
<feature type="compositionally biased region" description="Basic and acidic residues" evidence="2">
    <location>
        <begin position="194"/>
        <end position="205"/>
    </location>
</feature>
<feature type="compositionally biased region" description="Basic and acidic residues" evidence="2">
    <location>
        <begin position="314"/>
        <end position="323"/>
    </location>
</feature>
<feature type="splice variant" id="VSP_022729" description="In isoform 2." evidence="3">
    <location>
        <begin position="100"/>
        <end position="165"/>
    </location>
</feature>
<feature type="sequence variant" id="VAR_030268" description="In dbSNP:rs13660.">
    <original>G</original>
    <variation>R</variation>
    <location>
        <position position="302"/>
    </location>
</feature>
<gene>
    <name type="primary">CCDC74A</name>
</gene>
<keyword id="KW-0025">Alternative splicing</keyword>
<keyword id="KW-0175">Coiled coil</keyword>
<keyword id="KW-1267">Proteomics identification</keyword>
<keyword id="KW-1185">Reference proteome</keyword>
<protein>
    <recommendedName>
        <fullName>Coiled-coil domain-containing protein 74A</fullName>
    </recommendedName>
</protein>
<dbReference type="EMBL" id="AC093838">
    <property type="protein sequence ID" value="AAY14809.1"/>
    <property type="molecule type" value="Genomic_DNA"/>
</dbReference>
<dbReference type="EMBL" id="BC016861">
    <property type="protein sequence ID" value="AAH16861.1"/>
    <property type="molecule type" value="mRNA"/>
</dbReference>
<dbReference type="EMBL" id="BC063387">
    <property type="protein sequence ID" value="AAH63387.1"/>
    <property type="molecule type" value="mRNA"/>
</dbReference>
<dbReference type="CCDS" id="CCDS2167.1">
    <molecule id="Q96AQ1-1"/>
</dbReference>
<dbReference type="CCDS" id="CCDS58732.1">
    <molecule id="Q96AQ1-2"/>
</dbReference>
<dbReference type="RefSeq" id="NP_001245235.1">
    <molecule id="Q96AQ1-2"/>
    <property type="nucleotide sequence ID" value="NM_001258306.3"/>
</dbReference>
<dbReference type="RefSeq" id="NP_620125.1">
    <molecule id="Q96AQ1-1"/>
    <property type="nucleotide sequence ID" value="NM_138770.4"/>
</dbReference>
<dbReference type="SMR" id="Q96AQ1"/>
<dbReference type="BioGRID" id="124734">
    <property type="interactions" value="37"/>
</dbReference>
<dbReference type="FunCoup" id="Q96AQ1">
    <property type="interactions" value="4"/>
</dbReference>
<dbReference type="IntAct" id="Q96AQ1">
    <property type="interactions" value="35"/>
</dbReference>
<dbReference type="MINT" id="Q96AQ1"/>
<dbReference type="STRING" id="9606.ENSP00000295171"/>
<dbReference type="GlyGen" id="Q96AQ1">
    <property type="glycosylation" value="2 sites, 1 O-linked glycan (1 site)"/>
</dbReference>
<dbReference type="iPTMnet" id="Q96AQ1"/>
<dbReference type="PhosphoSitePlus" id="Q96AQ1"/>
<dbReference type="BioMuta" id="CCDC74A"/>
<dbReference type="DMDM" id="74731140"/>
<dbReference type="jPOST" id="Q96AQ1"/>
<dbReference type="MassIVE" id="Q96AQ1"/>
<dbReference type="PaxDb" id="9606-ENSP00000295171"/>
<dbReference type="PeptideAtlas" id="Q96AQ1"/>
<dbReference type="ProteomicsDB" id="75984">
    <molecule id="Q96AQ1-1"/>
</dbReference>
<dbReference type="ProteomicsDB" id="75985">
    <molecule id="Q96AQ1-2"/>
</dbReference>
<dbReference type="Antibodypedia" id="33536">
    <property type="antibodies" value="20 antibodies from 10 providers"/>
</dbReference>
<dbReference type="DNASU" id="90557"/>
<dbReference type="Ensembl" id="ENST00000295171.10">
    <molecule id="Q96AQ1-1"/>
    <property type="protein sequence ID" value="ENSP00000295171.6"/>
    <property type="gene ID" value="ENSG00000163040.15"/>
</dbReference>
<dbReference type="Ensembl" id="ENST00000409856.8">
    <molecule id="Q96AQ1-2"/>
    <property type="protein sequence ID" value="ENSP00000387009.3"/>
    <property type="gene ID" value="ENSG00000163040.15"/>
</dbReference>
<dbReference type="GeneID" id="90557"/>
<dbReference type="KEGG" id="hsa:90557"/>
<dbReference type="MANE-Select" id="ENST00000409856.8">
    <molecule id="Q96AQ1-2"/>
    <property type="protein sequence ID" value="ENSP00000387009.3"/>
    <property type="RefSeq nucleotide sequence ID" value="NM_001258306.3"/>
    <property type="RefSeq protein sequence ID" value="NP_001245235.1"/>
</dbReference>
<dbReference type="UCSC" id="uc002tta.5">
    <molecule id="Q96AQ1-1"/>
    <property type="organism name" value="human"/>
</dbReference>
<dbReference type="AGR" id="HGNC:25197"/>
<dbReference type="CTD" id="90557"/>
<dbReference type="GeneCards" id="CCDC74A"/>
<dbReference type="HGNC" id="HGNC:25197">
    <property type="gene designation" value="CCDC74A"/>
</dbReference>
<dbReference type="HPA" id="ENSG00000163040">
    <property type="expression patterns" value="Tissue enhanced (choroid plexus, testis)"/>
</dbReference>
<dbReference type="neXtProt" id="NX_Q96AQ1"/>
<dbReference type="OpenTargets" id="ENSG00000163040"/>
<dbReference type="PharmGKB" id="PA143485425"/>
<dbReference type="VEuPathDB" id="HostDB:ENSG00000163040"/>
<dbReference type="eggNOG" id="ENOG502S5P9">
    <property type="taxonomic scope" value="Eukaryota"/>
</dbReference>
<dbReference type="GeneTree" id="ENSGT00390000007249"/>
<dbReference type="HOGENOM" id="CLU_844571_0_0_1"/>
<dbReference type="InParanoid" id="Q96AQ1"/>
<dbReference type="OMA" id="MERSMEF"/>
<dbReference type="OrthoDB" id="9534572at2759"/>
<dbReference type="PAN-GO" id="Q96AQ1">
    <property type="GO annotations" value="0 GO annotations based on evolutionary models"/>
</dbReference>
<dbReference type="PhylomeDB" id="Q96AQ1"/>
<dbReference type="TreeFam" id="TF329669"/>
<dbReference type="PathwayCommons" id="Q96AQ1"/>
<dbReference type="SignaLink" id="Q96AQ1"/>
<dbReference type="BioGRID-ORCS" id="90557">
    <property type="hits" value="18 hits in 1056 CRISPR screens"/>
</dbReference>
<dbReference type="GenomeRNAi" id="90557"/>
<dbReference type="Pharos" id="Q96AQ1">
    <property type="development level" value="Tdark"/>
</dbReference>
<dbReference type="PRO" id="PR:Q96AQ1"/>
<dbReference type="Proteomes" id="UP000005640">
    <property type="component" value="Chromosome 2"/>
</dbReference>
<dbReference type="RNAct" id="Q96AQ1">
    <property type="molecule type" value="protein"/>
</dbReference>
<dbReference type="Bgee" id="ENSG00000163040">
    <property type="expression patterns" value="Expressed in right uterine tube and 96 other cell types or tissues"/>
</dbReference>
<dbReference type="ExpressionAtlas" id="Q96AQ1">
    <property type="expression patterns" value="baseline and differential"/>
</dbReference>
<dbReference type="InterPro" id="IPR029422">
    <property type="entry name" value="CCDC74_C"/>
</dbReference>
<dbReference type="InterPro" id="IPR040370">
    <property type="entry name" value="CCDC74A/CCDC74B/CCDC92"/>
</dbReference>
<dbReference type="InterPro" id="IPR039496">
    <property type="entry name" value="CCDC92/74_N"/>
</dbReference>
<dbReference type="PANTHER" id="PTHR14882">
    <property type="entry name" value="COILED-COIL DOMAIN-CONTAINING 74A"/>
    <property type="match status" value="1"/>
</dbReference>
<dbReference type="PANTHER" id="PTHR14882:SF7">
    <property type="entry name" value="COILED-COIL DOMAIN-CONTAINING PROTEIN 74A-RELATED"/>
    <property type="match status" value="1"/>
</dbReference>
<dbReference type="Pfam" id="PF14917">
    <property type="entry name" value="CCDC74_C"/>
    <property type="match status" value="1"/>
</dbReference>
<dbReference type="Pfam" id="PF14916">
    <property type="entry name" value="CCDC92"/>
    <property type="match status" value="1"/>
</dbReference>
<name>CC74A_HUMAN</name>
<comment type="interaction">
    <interactant intactId="EBI-8466689">
        <id>Q96AQ1</id>
    </interactant>
    <interactant intactId="EBI-741885">
        <id>Q96LK0</id>
        <label>CEP19</label>
    </interactant>
    <organismsDiffer>false</organismsDiffer>
    <experiments>3</experiments>
</comment>
<comment type="interaction">
    <interactant intactId="EBI-8466689">
        <id>Q96AQ1</id>
    </interactant>
    <interactant intactId="EBI-625509">
        <id>Q8N720</id>
        <label>ZNF655</label>
    </interactant>
    <organismsDiffer>false</organismsDiffer>
    <experiments>3</experiments>
</comment>
<comment type="alternative products">
    <event type="alternative splicing"/>
    <isoform>
        <id>Q96AQ1-1</id>
        <name>1</name>
        <sequence type="displayed"/>
    </isoform>
    <isoform>
        <id>Q96AQ1-2</id>
        <name>2</name>
        <sequence type="described" ref="VSP_022729"/>
    </isoform>
</comment>